<comment type="function">
    <text evidence="1">Catalyzes the reversible isomerization of glucose-6-phosphate to fructose-6-phosphate.</text>
</comment>
<comment type="catalytic activity">
    <reaction evidence="1">
        <text>alpha-D-glucose 6-phosphate = beta-D-fructose 6-phosphate</text>
        <dbReference type="Rhea" id="RHEA:11816"/>
        <dbReference type="ChEBI" id="CHEBI:57634"/>
        <dbReference type="ChEBI" id="CHEBI:58225"/>
        <dbReference type="EC" id="5.3.1.9"/>
    </reaction>
</comment>
<comment type="pathway">
    <text evidence="1">Carbohydrate biosynthesis; gluconeogenesis.</text>
</comment>
<comment type="pathway">
    <text evidence="1">Carbohydrate degradation; glycolysis; D-glyceraldehyde 3-phosphate and glycerone phosphate from D-glucose: step 2/4.</text>
</comment>
<comment type="subcellular location">
    <subcellularLocation>
        <location evidence="1">Cytoplasm</location>
    </subcellularLocation>
</comment>
<comment type="similarity">
    <text evidence="1">Belongs to the GPI family.</text>
</comment>
<sequence>MSHIKFDYSKVLDKFVAPHEVEYMQSQVTAADELIRKGTGAGSDFLGWLDLPEKYDREEFDRILKAAEQIKSDSDVLVVIGIGGSYLGAKAAIDFLNHHFANLQTKEERKAPQILYAGNSISSTYLADLVEYVADKDFSVNVISKSGTTTEPAIAFRVFKELLVKKYGQEEANKRIYATTDRQKGAVKVEADANGWGTFVVPDDIGGRFSVLTAVGLLPIAASGADIKALMEGANAARKDYTSDKISENEAYQYAAVRNILYRKGYATEILVNYEPSLQYFSEWWKQLAGESEGKDQKGIYPTSANFSTDLHSLGQFIQEGTRIMFETVVRVDKPRKNVLIPTLEEDLDGLGYLQGKDVDFVNKKATDGVLLAHTDGDVPNMYVTLPEQDAFTLGYTIYFFELAIALSGYLNAINPFDQPGVEAYKRNMFALLGKPGFEELSKELNARL</sequence>
<dbReference type="EC" id="5.3.1.9" evidence="1"/>
<dbReference type="EMBL" id="AE007317">
    <property type="protein sequence ID" value="AAL00684.1"/>
    <property type="molecule type" value="Genomic_DNA"/>
</dbReference>
<dbReference type="PIR" id="G98106">
    <property type="entry name" value="G98106"/>
</dbReference>
<dbReference type="RefSeq" id="NP_359473.1">
    <property type="nucleotide sequence ID" value="NC_003098.1"/>
</dbReference>
<dbReference type="RefSeq" id="WP_000018262.1">
    <property type="nucleotide sequence ID" value="NC_003098.1"/>
</dbReference>
<dbReference type="SMR" id="Q8DN74"/>
<dbReference type="STRING" id="171101.spr1882"/>
<dbReference type="KEGG" id="spr:spr1882"/>
<dbReference type="PATRIC" id="fig|171101.6.peg.2031"/>
<dbReference type="eggNOG" id="COG0166">
    <property type="taxonomic scope" value="Bacteria"/>
</dbReference>
<dbReference type="HOGENOM" id="CLU_037303_0_1_9"/>
<dbReference type="UniPathway" id="UPA00109">
    <property type="reaction ID" value="UER00181"/>
</dbReference>
<dbReference type="UniPathway" id="UPA00138"/>
<dbReference type="Proteomes" id="UP000000586">
    <property type="component" value="Chromosome"/>
</dbReference>
<dbReference type="GO" id="GO:0005829">
    <property type="term" value="C:cytosol"/>
    <property type="evidence" value="ECO:0000318"/>
    <property type="project" value="GO_Central"/>
</dbReference>
<dbReference type="GO" id="GO:0097367">
    <property type="term" value="F:carbohydrate derivative binding"/>
    <property type="evidence" value="ECO:0007669"/>
    <property type="project" value="InterPro"/>
</dbReference>
<dbReference type="GO" id="GO:0004347">
    <property type="term" value="F:glucose-6-phosphate isomerase activity"/>
    <property type="evidence" value="ECO:0000318"/>
    <property type="project" value="GO_Central"/>
</dbReference>
<dbReference type="GO" id="GO:0048029">
    <property type="term" value="F:monosaccharide binding"/>
    <property type="evidence" value="ECO:0000318"/>
    <property type="project" value="GO_Central"/>
</dbReference>
<dbReference type="GO" id="GO:0006094">
    <property type="term" value="P:gluconeogenesis"/>
    <property type="evidence" value="ECO:0000318"/>
    <property type="project" value="GO_Central"/>
</dbReference>
<dbReference type="GO" id="GO:0051156">
    <property type="term" value="P:glucose 6-phosphate metabolic process"/>
    <property type="evidence" value="ECO:0000318"/>
    <property type="project" value="GO_Central"/>
</dbReference>
<dbReference type="GO" id="GO:0006096">
    <property type="term" value="P:glycolytic process"/>
    <property type="evidence" value="ECO:0000318"/>
    <property type="project" value="GO_Central"/>
</dbReference>
<dbReference type="CDD" id="cd05015">
    <property type="entry name" value="SIS_PGI_1"/>
    <property type="match status" value="1"/>
</dbReference>
<dbReference type="CDD" id="cd05016">
    <property type="entry name" value="SIS_PGI_2"/>
    <property type="match status" value="1"/>
</dbReference>
<dbReference type="FunFam" id="3.40.50.10490:FF:000015">
    <property type="entry name" value="Glucose-6-phosphate isomerase"/>
    <property type="match status" value="1"/>
</dbReference>
<dbReference type="FunFam" id="3.40.50.10490:FF:000016">
    <property type="entry name" value="Glucose-6-phosphate isomerase"/>
    <property type="match status" value="1"/>
</dbReference>
<dbReference type="Gene3D" id="3.40.50.10490">
    <property type="entry name" value="Glucose-6-phosphate isomerase like protein, domain 1"/>
    <property type="match status" value="3"/>
</dbReference>
<dbReference type="HAMAP" id="MF_00473">
    <property type="entry name" value="G6P_isomerase"/>
    <property type="match status" value="1"/>
</dbReference>
<dbReference type="InterPro" id="IPR001672">
    <property type="entry name" value="G6P_Isomerase"/>
</dbReference>
<dbReference type="InterPro" id="IPR018189">
    <property type="entry name" value="Phosphoglucose_isomerase_CS"/>
</dbReference>
<dbReference type="InterPro" id="IPR046348">
    <property type="entry name" value="SIS_dom_sf"/>
</dbReference>
<dbReference type="InterPro" id="IPR035476">
    <property type="entry name" value="SIS_PGI_1"/>
</dbReference>
<dbReference type="InterPro" id="IPR035482">
    <property type="entry name" value="SIS_PGI_2"/>
</dbReference>
<dbReference type="NCBIfam" id="NF010697">
    <property type="entry name" value="PRK14097.1"/>
    <property type="match status" value="1"/>
</dbReference>
<dbReference type="PANTHER" id="PTHR11469">
    <property type="entry name" value="GLUCOSE-6-PHOSPHATE ISOMERASE"/>
    <property type="match status" value="1"/>
</dbReference>
<dbReference type="PANTHER" id="PTHR11469:SF1">
    <property type="entry name" value="GLUCOSE-6-PHOSPHATE ISOMERASE"/>
    <property type="match status" value="1"/>
</dbReference>
<dbReference type="Pfam" id="PF00342">
    <property type="entry name" value="PGI"/>
    <property type="match status" value="1"/>
</dbReference>
<dbReference type="PRINTS" id="PR00662">
    <property type="entry name" value="G6PISOMERASE"/>
</dbReference>
<dbReference type="SUPFAM" id="SSF53697">
    <property type="entry name" value="SIS domain"/>
    <property type="match status" value="1"/>
</dbReference>
<dbReference type="PROSITE" id="PS00765">
    <property type="entry name" value="P_GLUCOSE_ISOMERASE_1"/>
    <property type="match status" value="1"/>
</dbReference>
<dbReference type="PROSITE" id="PS00174">
    <property type="entry name" value="P_GLUCOSE_ISOMERASE_2"/>
    <property type="match status" value="1"/>
</dbReference>
<dbReference type="PROSITE" id="PS51463">
    <property type="entry name" value="P_GLUCOSE_ISOMERASE_3"/>
    <property type="match status" value="1"/>
</dbReference>
<proteinExistence type="inferred from homology"/>
<keyword id="KW-0963">Cytoplasm</keyword>
<keyword id="KW-0312">Gluconeogenesis</keyword>
<keyword id="KW-0324">Glycolysis</keyword>
<keyword id="KW-0413">Isomerase</keyword>
<keyword id="KW-1185">Reference proteome</keyword>
<evidence type="ECO:0000255" key="1">
    <source>
        <dbReference type="HAMAP-Rule" id="MF_00473"/>
    </source>
</evidence>
<name>G6PI_STRR6</name>
<gene>
    <name evidence="1" type="primary">pgi</name>
    <name type="synonym">gpi</name>
    <name type="ordered locus">spr1882</name>
</gene>
<feature type="chain" id="PRO_0000180739" description="Glucose-6-phosphate isomerase">
    <location>
        <begin position="1"/>
        <end position="449"/>
    </location>
</feature>
<feature type="active site" description="Proton donor" evidence="1">
    <location>
        <position position="291"/>
    </location>
</feature>
<feature type="active site" evidence="1">
    <location>
        <position position="312"/>
    </location>
</feature>
<feature type="active site" evidence="1">
    <location>
        <position position="426"/>
    </location>
</feature>
<accession>Q8DN74</accession>
<organism>
    <name type="scientific">Streptococcus pneumoniae (strain ATCC BAA-255 / R6)</name>
    <dbReference type="NCBI Taxonomy" id="171101"/>
    <lineage>
        <taxon>Bacteria</taxon>
        <taxon>Bacillati</taxon>
        <taxon>Bacillota</taxon>
        <taxon>Bacilli</taxon>
        <taxon>Lactobacillales</taxon>
        <taxon>Streptococcaceae</taxon>
        <taxon>Streptococcus</taxon>
    </lineage>
</organism>
<protein>
    <recommendedName>
        <fullName evidence="1">Glucose-6-phosphate isomerase</fullName>
        <shortName evidence="1">GPI</shortName>
        <ecNumber evidence="1">5.3.1.9</ecNumber>
    </recommendedName>
    <alternativeName>
        <fullName evidence="1">Phosphoglucose isomerase</fullName>
        <shortName evidence="1">PGI</shortName>
    </alternativeName>
    <alternativeName>
        <fullName evidence="1">Phosphohexose isomerase</fullName>
        <shortName evidence="1">PHI</shortName>
    </alternativeName>
</protein>
<reference key="1">
    <citation type="journal article" date="2001" name="J. Bacteriol.">
        <title>Genome of the bacterium Streptococcus pneumoniae strain R6.</title>
        <authorList>
            <person name="Hoskins J."/>
            <person name="Alborn W.E. Jr."/>
            <person name="Arnold J."/>
            <person name="Blaszczak L.C."/>
            <person name="Burgett S."/>
            <person name="DeHoff B.S."/>
            <person name="Estrem S.T."/>
            <person name="Fritz L."/>
            <person name="Fu D.-J."/>
            <person name="Fuller W."/>
            <person name="Geringer C."/>
            <person name="Gilmour R."/>
            <person name="Glass J.S."/>
            <person name="Khoja H."/>
            <person name="Kraft A.R."/>
            <person name="Lagace R.E."/>
            <person name="LeBlanc D.J."/>
            <person name="Lee L.N."/>
            <person name="Lefkowitz E.J."/>
            <person name="Lu J."/>
            <person name="Matsushima P."/>
            <person name="McAhren S.M."/>
            <person name="McHenney M."/>
            <person name="McLeaster K."/>
            <person name="Mundy C.W."/>
            <person name="Nicas T.I."/>
            <person name="Norris F.H."/>
            <person name="O'Gara M."/>
            <person name="Peery R.B."/>
            <person name="Robertson G.T."/>
            <person name="Rockey P."/>
            <person name="Sun P.-M."/>
            <person name="Winkler M.E."/>
            <person name="Yang Y."/>
            <person name="Young-Bellido M."/>
            <person name="Zhao G."/>
            <person name="Zook C.A."/>
            <person name="Baltz R.H."/>
            <person name="Jaskunas S.R."/>
            <person name="Rosteck P.R. Jr."/>
            <person name="Skatrud P.L."/>
            <person name="Glass J.I."/>
        </authorList>
    </citation>
    <scope>NUCLEOTIDE SEQUENCE [LARGE SCALE GENOMIC DNA]</scope>
    <source>
        <strain>ATCC BAA-255 / R6</strain>
    </source>
</reference>